<gene>
    <name evidence="1" type="primary">hisC</name>
    <name type="ordered locus">STER_1207</name>
</gene>
<dbReference type="EC" id="2.6.1.9" evidence="1"/>
<dbReference type="EMBL" id="CP000419">
    <property type="protein sequence ID" value="ABJ66397.1"/>
    <property type="molecule type" value="Genomic_DNA"/>
</dbReference>
<dbReference type="RefSeq" id="WP_011681272.1">
    <property type="nucleotide sequence ID" value="NC_008532.1"/>
</dbReference>
<dbReference type="SMR" id="Q03K75"/>
<dbReference type="KEGG" id="ste:STER_1207"/>
<dbReference type="HOGENOM" id="CLU_017584_3_0_9"/>
<dbReference type="UniPathway" id="UPA00031">
    <property type="reaction ID" value="UER00012"/>
</dbReference>
<dbReference type="GO" id="GO:0004400">
    <property type="term" value="F:histidinol-phosphate transaminase activity"/>
    <property type="evidence" value="ECO:0007669"/>
    <property type="project" value="UniProtKB-UniRule"/>
</dbReference>
<dbReference type="GO" id="GO:0030170">
    <property type="term" value="F:pyridoxal phosphate binding"/>
    <property type="evidence" value="ECO:0007669"/>
    <property type="project" value="InterPro"/>
</dbReference>
<dbReference type="GO" id="GO:0000105">
    <property type="term" value="P:L-histidine biosynthetic process"/>
    <property type="evidence" value="ECO:0007669"/>
    <property type="project" value="UniProtKB-UniRule"/>
</dbReference>
<dbReference type="CDD" id="cd00609">
    <property type="entry name" value="AAT_like"/>
    <property type="match status" value="1"/>
</dbReference>
<dbReference type="Gene3D" id="3.90.1150.10">
    <property type="entry name" value="Aspartate Aminotransferase, domain 1"/>
    <property type="match status" value="1"/>
</dbReference>
<dbReference type="Gene3D" id="3.40.640.10">
    <property type="entry name" value="Type I PLP-dependent aspartate aminotransferase-like (Major domain)"/>
    <property type="match status" value="1"/>
</dbReference>
<dbReference type="HAMAP" id="MF_01023">
    <property type="entry name" value="HisC_aminotrans_2"/>
    <property type="match status" value="1"/>
</dbReference>
<dbReference type="InterPro" id="IPR004839">
    <property type="entry name" value="Aminotransferase_I/II_large"/>
</dbReference>
<dbReference type="InterPro" id="IPR005861">
    <property type="entry name" value="HisP_aminotrans"/>
</dbReference>
<dbReference type="InterPro" id="IPR050106">
    <property type="entry name" value="HistidinolP_aminotransfase"/>
</dbReference>
<dbReference type="InterPro" id="IPR015424">
    <property type="entry name" value="PyrdxlP-dep_Trfase"/>
</dbReference>
<dbReference type="InterPro" id="IPR015421">
    <property type="entry name" value="PyrdxlP-dep_Trfase_major"/>
</dbReference>
<dbReference type="InterPro" id="IPR015422">
    <property type="entry name" value="PyrdxlP-dep_Trfase_small"/>
</dbReference>
<dbReference type="NCBIfam" id="TIGR01141">
    <property type="entry name" value="hisC"/>
    <property type="match status" value="1"/>
</dbReference>
<dbReference type="PANTHER" id="PTHR43643:SF3">
    <property type="entry name" value="HISTIDINOL-PHOSPHATE AMINOTRANSFERASE"/>
    <property type="match status" value="1"/>
</dbReference>
<dbReference type="PANTHER" id="PTHR43643">
    <property type="entry name" value="HISTIDINOL-PHOSPHATE AMINOTRANSFERASE 2"/>
    <property type="match status" value="1"/>
</dbReference>
<dbReference type="Pfam" id="PF00155">
    <property type="entry name" value="Aminotran_1_2"/>
    <property type="match status" value="1"/>
</dbReference>
<dbReference type="SUPFAM" id="SSF53383">
    <property type="entry name" value="PLP-dependent transferases"/>
    <property type="match status" value="1"/>
</dbReference>
<sequence>MEIKGLRKIEPYVAGSQPAEKNIIKLNTNENAYGPSPAVHQALASFDAHQLRKYSTLDQTALRQALSDQLGVPTDQFIIGNGSDDILSMAFLAFFNSEEKIIFPDLTYGFYKVWADLYRIPFREVPLTSSFEIDTQDYLVENGGIILTNPNAPTGIYKPLDQVEEIVKANQSVVVIIDESYINFGGETALPLLEKYDNVFITRTFSKDASLAGLRVGYGIGSPKLMAVINAVKNSVNPYNVDSIAEALGTAAVRSWDYYEDICAKIMATRDWFSQELQAIGFDVLPSKTNFVLVKPYGVTAGQLFAYLQSKKIYVRYFPKVERISDRLRISIGTQDEMERVLMTIQELQA</sequence>
<keyword id="KW-0028">Amino-acid biosynthesis</keyword>
<keyword id="KW-0032">Aminotransferase</keyword>
<keyword id="KW-0368">Histidine biosynthesis</keyword>
<keyword id="KW-0663">Pyridoxal phosphate</keyword>
<keyword id="KW-0808">Transferase</keyword>
<protein>
    <recommendedName>
        <fullName evidence="1">Histidinol-phosphate aminotransferase</fullName>
        <ecNumber evidence="1">2.6.1.9</ecNumber>
    </recommendedName>
    <alternativeName>
        <fullName evidence="1">Imidazole acetol-phosphate transaminase</fullName>
    </alternativeName>
</protein>
<comment type="catalytic activity">
    <reaction evidence="1">
        <text>L-histidinol phosphate + 2-oxoglutarate = 3-(imidazol-4-yl)-2-oxopropyl phosphate + L-glutamate</text>
        <dbReference type="Rhea" id="RHEA:23744"/>
        <dbReference type="ChEBI" id="CHEBI:16810"/>
        <dbReference type="ChEBI" id="CHEBI:29985"/>
        <dbReference type="ChEBI" id="CHEBI:57766"/>
        <dbReference type="ChEBI" id="CHEBI:57980"/>
        <dbReference type="EC" id="2.6.1.9"/>
    </reaction>
</comment>
<comment type="cofactor">
    <cofactor evidence="1">
        <name>pyridoxal 5'-phosphate</name>
        <dbReference type="ChEBI" id="CHEBI:597326"/>
    </cofactor>
</comment>
<comment type="pathway">
    <text evidence="1">Amino-acid biosynthesis; L-histidine biosynthesis; L-histidine from 5-phospho-alpha-D-ribose 1-diphosphate: step 7/9.</text>
</comment>
<comment type="subunit">
    <text evidence="1">Homodimer.</text>
</comment>
<comment type="similarity">
    <text evidence="1">Belongs to the class-II pyridoxal-phosphate-dependent aminotransferase family. Histidinol-phosphate aminotransferase subfamily.</text>
</comment>
<reference key="1">
    <citation type="journal article" date="2006" name="Proc. Natl. Acad. Sci. U.S.A.">
        <title>Comparative genomics of the lactic acid bacteria.</title>
        <authorList>
            <person name="Makarova K.S."/>
            <person name="Slesarev A."/>
            <person name="Wolf Y.I."/>
            <person name="Sorokin A."/>
            <person name="Mirkin B."/>
            <person name="Koonin E.V."/>
            <person name="Pavlov A."/>
            <person name="Pavlova N."/>
            <person name="Karamychev V."/>
            <person name="Polouchine N."/>
            <person name="Shakhova V."/>
            <person name="Grigoriev I."/>
            <person name="Lou Y."/>
            <person name="Rohksar D."/>
            <person name="Lucas S."/>
            <person name="Huang K."/>
            <person name="Goodstein D.M."/>
            <person name="Hawkins T."/>
            <person name="Plengvidhya V."/>
            <person name="Welker D."/>
            <person name="Hughes J."/>
            <person name="Goh Y."/>
            <person name="Benson A."/>
            <person name="Baldwin K."/>
            <person name="Lee J.-H."/>
            <person name="Diaz-Muniz I."/>
            <person name="Dosti B."/>
            <person name="Smeianov V."/>
            <person name="Wechter W."/>
            <person name="Barabote R."/>
            <person name="Lorca G."/>
            <person name="Altermann E."/>
            <person name="Barrangou R."/>
            <person name="Ganesan B."/>
            <person name="Xie Y."/>
            <person name="Rawsthorne H."/>
            <person name="Tamir D."/>
            <person name="Parker C."/>
            <person name="Breidt F."/>
            <person name="Broadbent J.R."/>
            <person name="Hutkins R."/>
            <person name="O'Sullivan D."/>
            <person name="Steele J."/>
            <person name="Unlu G."/>
            <person name="Saier M.H. Jr."/>
            <person name="Klaenhammer T."/>
            <person name="Richardson P."/>
            <person name="Kozyavkin S."/>
            <person name="Weimer B.C."/>
            <person name="Mills D.A."/>
        </authorList>
    </citation>
    <scope>NUCLEOTIDE SEQUENCE [LARGE SCALE GENOMIC DNA]</scope>
    <source>
        <strain>ATCC BAA-491 / LMD-9</strain>
    </source>
</reference>
<evidence type="ECO:0000255" key="1">
    <source>
        <dbReference type="HAMAP-Rule" id="MF_01023"/>
    </source>
</evidence>
<organism>
    <name type="scientific">Streptococcus thermophilus (strain ATCC BAA-491 / LMD-9)</name>
    <dbReference type="NCBI Taxonomy" id="322159"/>
    <lineage>
        <taxon>Bacteria</taxon>
        <taxon>Bacillati</taxon>
        <taxon>Bacillota</taxon>
        <taxon>Bacilli</taxon>
        <taxon>Lactobacillales</taxon>
        <taxon>Streptococcaceae</taxon>
        <taxon>Streptococcus</taxon>
    </lineage>
</organism>
<name>HIS8_STRTD</name>
<feature type="chain" id="PRO_0000319790" description="Histidinol-phosphate aminotransferase">
    <location>
        <begin position="1"/>
        <end position="350"/>
    </location>
</feature>
<feature type="modified residue" description="N6-(pyridoxal phosphate)lysine" evidence="1">
    <location>
        <position position="207"/>
    </location>
</feature>
<accession>Q03K75</accession>
<proteinExistence type="inferred from homology"/>